<accession>A1KF76</accession>
<dbReference type="EMBL" id="AM408590">
    <property type="protein sequence ID" value="CAL70277.1"/>
    <property type="molecule type" value="Genomic_DNA"/>
</dbReference>
<dbReference type="RefSeq" id="WP_003899877.1">
    <property type="nucleotide sequence ID" value="NC_008769.1"/>
</dbReference>
<dbReference type="KEGG" id="mbb:BCG_0293c"/>
<dbReference type="HOGENOM" id="CLU_019250_2_2_11"/>
<dbReference type="UniPathway" id="UPA00148"/>
<dbReference type="Proteomes" id="UP000001472">
    <property type="component" value="Chromosome"/>
</dbReference>
<dbReference type="GO" id="GO:0015420">
    <property type="term" value="F:ABC-type vitamin B12 transporter activity"/>
    <property type="evidence" value="ECO:0007669"/>
    <property type="project" value="UniProtKB-UniRule"/>
</dbReference>
<dbReference type="GO" id="GO:0003824">
    <property type="term" value="F:catalytic activity"/>
    <property type="evidence" value="ECO:0007669"/>
    <property type="project" value="InterPro"/>
</dbReference>
<dbReference type="GO" id="GO:0009236">
    <property type="term" value="P:cobalamin biosynthetic process"/>
    <property type="evidence" value="ECO:0007669"/>
    <property type="project" value="UniProtKB-UniRule"/>
</dbReference>
<dbReference type="CDD" id="cd05389">
    <property type="entry name" value="CobQ_N"/>
    <property type="match status" value="1"/>
</dbReference>
<dbReference type="CDD" id="cd01750">
    <property type="entry name" value="GATase1_CobQ"/>
    <property type="match status" value="1"/>
</dbReference>
<dbReference type="Gene3D" id="3.40.50.880">
    <property type="match status" value="1"/>
</dbReference>
<dbReference type="Gene3D" id="3.40.50.300">
    <property type="entry name" value="P-loop containing nucleotide triphosphate hydrolases"/>
    <property type="match status" value="1"/>
</dbReference>
<dbReference type="HAMAP" id="MF_00028">
    <property type="entry name" value="CobQ"/>
    <property type="match status" value="1"/>
</dbReference>
<dbReference type="InterPro" id="IPR029062">
    <property type="entry name" value="Class_I_gatase-like"/>
</dbReference>
<dbReference type="InterPro" id="IPR002586">
    <property type="entry name" value="CobQ/CobB/MinD/ParA_Nub-bd_dom"/>
</dbReference>
<dbReference type="InterPro" id="IPR033949">
    <property type="entry name" value="CobQ_GATase1"/>
</dbReference>
<dbReference type="InterPro" id="IPR047045">
    <property type="entry name" value="CobQ_N"/>
</dbReference>
<dbReference type="InterPro" id="IPR004459">
    <property type="entry name" value="CobQ_synth"/>
</dbReference>
<dbReference type="InterPro" id="IPR011698">
    <property type="entry name" value="GATase_3"/>
</dbReference>
<dbReference type="InterPro" id="IPR027417">
    <property type="entry name" value="P-loop_NTPase"/>
</dbReference>
<dbReference type="NCBIfam" id="TIGR00313">
    <property type="entry name" value="cobQ"/>
    <property type="match status" value="1"/>
</dbReference>
<dbReference type="NCBIfam" id="NF001989">
    <property type="entry name" value="PRK00784.1"/>
    <property type="match status" value="1"/>
</dbReference>
<dbReference type="PANTHER" id="PTHR21343:SF1">
    <property type="entry name" value="COBYRIC ACID SYNTHASE"/>
    <property type="match status" value="1"/>
</dbReference>
<dbReference type="PANTHER" id="PTHR21343">
    <property type="entry name" value="DETHIOBIOTIN SYNTHETASE"/>
    <property type="match status" value="1"/>
</dbReference>
<dbReference type="Pfam" id="PF01656">
    <property type="entry name" value="CbiA"/>
    <property type="match status" value="1"/>
</dbReference>
<dbReference type="Pfam" id="PF07685">
    <property type="entry name" value="GATase_3"/>
    <property type="match status" value="1"/>
</dbReference>
<dbReference type="SUPFAM" id="SSF52317">
    <property type="entry name" value="Class I glutamine amidotransferase-like"/>
    <property type="match status" value="1"/>
</dbReference>
<dbReference type="SUPFAM" id="SSF52540">
    <property type="entry name" value="P-loop containing nucleoside triphosphate hydrolases"/>
    <property type="match status" value="1"/>
</dbReference>
<dbReference type="PROSITE" id="PS51274">
    <property type="entry name" value="GATASE_COBBQ"/>
    <property type="match status" value="1"/>
</dbReference>
<proteinExistence type="inferred from homology"/>
<keyword id="KW-0169">Cobalamin biosynthesis</keyword>
<keyword id="KW-0315">Glutamine amidotransferase</keyword>
<feature type="chain" id="PRO_0000332348" description="Cobyric acid synthase">
    <location>
        <begin position="1"/>
        <end position="494"/>
    </location>
</feature>
<feature type="domain" description="GATase cobBQ-type" evidence="1">
    <location>
        <begin position="253"/>
        <end position="432"/>
    </location>
</feature>
<feature type="active site" description="Nucleophile" evidence="1">
    <location>
        <position position="334"/>
    </location>
</feature>
<feature type="active site" evidence="1">
    <location>
        <position position="424"/>
    </location>
</feature>
<organism>
    <name type="scientific">Mycobacterium bovis (strain BCG / Pasteur 1173P2)</name>
    <dbReference type="NCBI Taxonomy" id="410289"/>
    <lineage>
        <taxon>Bacteria</taxon>
        <taxon>Bacillati</taxon>
        <taxon>Actinomycetota</taxon>
        <taxon>Actinomycetes</taxon>
        <taxon>Mycobacteriales</taxon>
        <taxon>Mycobacteriaceae</taxon>
        <taxon>Mycobacterium</taxon>
        <taxon>Mycobacterium tuberculosis complex</taxon>
    </lineage>
</organism>
<reference key="1">
    <citation type="journal article" date="2007" name="Proc. Natl. Acad. Sci. U.S.A.">
        <title>Genome plasticity of BCG and impact on vaccine efficacy.</title>
        <authorList>
            <person name="Brosch R."/>
            <person name="Gordon S.V."/>
            <person name="Garnier T."/>
            <person name="Eiglmeier K."/>
            <person name="Frigui W."/>
            <person name="Valenti P."/>
            <person name="Dos Santos S."/>
            <person name="Duthoy S."/>
            <person name="Lacroix C."/>
            <person name="Garcia-Pelayo C."/>
            <person name="Inwald J.K."/>
            <person name="Golby P."/>
            <person name="Garcia J.N."/>
            <person name="Hewinson R.G."/>
            <person name="Behr M.A."/>
            <person name="Quail M.A."/>
            <person name="Churcher C."/>
            <person name="Barrell B.G."/>
            <person name="Parkhill J."/>
            <person name="Cole S.T."/>
        </authorList>
    </citation>
    <scope>NUCLEOTIDE SEQUENCE [LARGE SCALE GENOMIC DNA]</scope>
    <source>
        <strain>BCG / Pasteur 1173P2</strain>
    </source>
</reference>
<name>COBQ_MYCBP</name>
<sequence length="494" mass="52135">MSGLLVAGTTSDAGKSAVTAGLCRALARRGVRVAPFKAQNMSNNSMVCRGPDGTGVEIGRAQWVQALAARTTPEAAMNPVLLKPASDHRSHVVLMGKPWGEVASSSWCAGRRALAEAACRAFDALAARYDVVVAEGAGSPAEINLRAGDYVNMGLARHAGLPTIVVGDIDRGGVFAAFLGTVALLAAEDQALVAGFVVNKFRGDSDLLAPGLRDLERVTGRRVYGTLPWHPDLWLDSEDALDLQGRRAAGTGARRVAVVRLPRISNFTDVDALGLEPDLDVVFASDPRALDDADLIVLPGTRATIADLAWLRARDLDRALLVHVAAGKPLLGICGGFQMLGRVIRDPYGIEGPGGQVTEVEGLGLLDVETAFSPHKVLRLPRGEGLGVPASGYEIHHGRITRGDTAEEFLGGARDGPVFGTMWHGSLEGDALREAFLRETLGLAPSGSCFLAARERRLDLLGDLVERHLDVDALLNLARHGCPPTLPFLAPGAP</sequence>
<protein>
    <recommendedName>
        <fullName evidence="1">Cobyric acid synthase</fullName>
    </recommendedName>
</protein>
<comment type="function">
    <text evidence="1">Catalyzes amidations at positions B, D, E, and G on adenosylcobyrinic A,C-diamide. NH(2) groups are provided by glutamine, and one molecule of ATP is hydrogenolyzed for each amidation.</text>
</comment>
<comment type="pathway">
    <text evidence="1">Cofactor biosynthesis; adenosylcobalamin biosynthesis.</text>
</comment>
<comment type="similarity">
    <text evidence="1">Belongs to the CobB/CobQ family. CobQ subfamily.</text>
</comment>
<gene>
    <name evidence="1" type="primary">cobQ</name>
    <name type="ordered locus">BCG_0293c</name>
</gene>
<evidence type="ECO:0000255" key="1">
    <source>
        <dbReference type="HAMAP-Rule" id="MF_00028"/>
    </source>
</evidence>